<sequence length="216" mass="22249">MRLDLYVITDGAIGGGRSHAEIARFACAGGADAIQLRDKACGPDALCRIGREIRAITRDTGTLFIVNDRLDVALACGADGVHLGQGDLRVDTARRLAPRPFMIGVSVGNAEEAISAVVAGADYVAASPIFATSSKDDAGPGCGISGLREIRAAVAVPVVAIGGITRDNVAEVIAGGADSIAVISAVVGQPDIVAAARDLRERITTAKEQYREKRDA</sequence>
<dbReference type="EC" id="2.5.1.3" evidence="1"/>
<dbReference type="EMBL" id="CP000780">
    <property type="protein sequence ID" value="ABS56570.1"/>
    <property type="molecule type" value="Genomic_DNA"/>
</dbReference>
<dbReference type="RefSeq" id="WP_012107626.1">
    <property type="nucleotide sequence ID" value="NC_009712.1"/>
</dbReference>
<dbReference type="SMR" id="A7IA09"/>
<dbReference type="STRING" id="456442.Mboo_2056"/>
<dbReference type="GeneID" id="5410689"/>
<dbReference type="KEGG" id="mbn:Mboo_2056"/>
<dbReference type="eggNOG" id="arCOG01089">
    <property type="taxonomic scope" value="Archaea"/>
</dbReference>
<dbReference type="HOGENOM" id="CLU_018272_3_2_2"/>
<dbReference type="OrthoDB" id="85572at2157"/>
<dbReference type="UniPathway" id="UPA00060">
    <property type="reaction ID" value="UER00141"/>
</dbReference>
<dbReference type="Proteomes" id="UP000002408">
    <property type="component" value="Chromosome"/>
</dbReference>
<dbReference type="GO" id="GO:0005737">
    <property type="term" value="C:cytoplasm"/>
    <property type="evidence" value="ECO:0007669"/>
    <property type="project" value="TreeGrafter"/>
</dbReference>
<dbReference type="GO" id="GO:0000287">
    <property type="term" value="F:magnesium ion binding"/>
    <property type="evidence" value="ECO:0007669"/>
    <property type="project" value="UniProtKB-UniRule"/>
</dbReference>
<dbReference type="GO" id="GO:0004789">
    <property type="term" value="F:thiamine-phosphate diphosphorylase activity"/>
    <property type="evidence" value="ECO:0007669"/>
    <property type="project" value="UniProtKB-UniRule"/>
</dbReference>
<dbReference type="GO" id="GO:0009228">
    <property type="term" value="P:thiamine biosynthetic process"/>
    <property type="evidence" value="ECO:0007669"/>
    <property type="project" value="UniProtKB-KW"/>
</dbReference>
<dbReference type="GO" id="GO:0009229">
    <property type="term" value="P:thiamine diphosphate biosynthetic process"/>
    <property type="evidence" value="ECO:0007669"/>
    <property type="project" value="UniProtKB-UniRule"/>
</dbReference>
<dbReference type="CDD" id="cd00564">
    <property type="entry name" value="TMP_TenI"/>
    <property type="match status" value="1"/>
</dbReference>
<dbReference type="FunFam" id="3.20.20.70:FF:000096">
    <property type="entry name" value="Thiamine-phosphate synthase"/>
    <property type="match status" value="1"/>
</dbReference>
<dbReference type="Gene3D" id="3.20.20.70">
    <property type="entry name" value="Aldolase class I"/>
    <property type="match status" value="1"/>
</dbReference>
<dbReference type="HAMAP" id="MF_00097">
    <property type="entry name" value="TMP_synthase"/>
    <property type="match status" value="1"/>
</dbReference>
<dbReference type="InterPro" id="IPR013785">
    <property type="entry name" value="Aldolase_TIM"/>
</dbReference>
<dbReference type="InterPro" id="IPR036206">
    <property type="entry name" value="ThiamineP_synth_sf"/>
</dbReference>
<dbReference type="InterPro" id="IPR022998">
    <property type="entry name" value="ThiamineP_synth_TenI"/>
</dbReference>
<dbReference type="InterPro" id="IPR034291">
    <property type="entry name" value="TMP_synthase"/>
</dbReference>
<dbReference type="NCBIfam" id="TIGR00693">
    <property type="entry name" value="thiE"/>
    <property type="match status" value="1"/>
</dbReference>
<dbReference type="PANTHER" id="PTHR20857">
    <property type="entry name" value="THIAMINE-PHOSPHATE PYROPHOSPHORYLASE"/>
    <property type="match status" value="1"/>
</dbReference>
<dbReference type="PANTHER" id="PTHR20857:SF15">
    <property type="entry name" value="THIAMINE-PHOSPHATE SYNTHASE"/>
    <property type="match status" value="1"/>
</dbReference>
<dbReference type="Pfam" id="PF02581">
    <property type="entry name" value="TMP-TENI"/>
    <property type="match status" value="1"/>
</dbReference>
<dbReference type="SUPFAM" id="SSF51391">
    <property type="entry name" value="Thiamin phosphate synthase"/>
    <property type="match status" value="1"/>
</dbReference>
<proteinExistence type="inferred from homology"/>
<keyword id="KW-0460">Magnesium</keyword>
<keyword id="KW-0479">Metal-binding</keyword>
<keyword id="KW-1185">Reference proteome</keyword>
<keyword id="KW-0784">Thiamine biosynthesis</keyword>
<keyword id="KW-0808">Transferase</keyword>
<protein>
    <recommendedName>
        <fullName evidence="1">Thiamine-phosphate synthase</fullName>
        <shortName evidence="1">TP synthase</shortName>
        <shortName evidence="1">TPS</shortName>
        <ecNumber evidence="1">2.5.1.3</ecNumber>
    </recommendedName>
    <alternativeName>
        <fullName evidence="1">Thiamine-phosphate pyrophosphorylase</fullName>
        <shortName evidence="1">TMP pyrophosphorylase</shortName>
        <shortName evidence="1">TMP-PPase</shortName>
    </alternativeName>
</protein>
<accession>A7IA09</accession>
<reference key="1">
    <citation type="journal article" date="2015" name="Microbiology">
        <title>Genome of Methanoregula boonei 6A8 reveals adaptations to oligotrophic peatland environments.</title>
        <authorList>
            <person name="Braeuer S."/>
            <person name="Cadillo-Quiroz H."/>
            <person name="Kyrpides N."/>
            <person name="Woyke T."/>
            <person name="Goodwin L."/>
            <person name="Detter C."/>
            <person name="Podell S."/>
            <person name="Yavitt J.B."/>
            <person name="Zinder S.H."/>
        </authorList>
    </citation>
    <scope>NUCLEOTIDE SEQUENCE [LARGE SCALE GENOMIC DNA]</scope>
    <source>
        <strain>DSM 21154 / JCM 14090 / 6A8</strain>
    </source>
</reference>
<evidence type="ECO:0000255" key="1">
    <source>
        <dbReference type="HAMAP-Rule" id="MF_00097"/>
    </source>
</evidence>
<name>THIE_METB6</name>
<comment type="function">
    <text evidence="1">Condenses 4-methyl-5-(beta-hydroxyethyl)thiazole monophosphate (THZ-P) and 2-methyl-4-amino-5-hydroxymethyl pyrimidine pyrophosphate (HMP-PP) to form thiamine monophosphate (TMP).</text>
</comment>
<comment type="catalytic activity">
    <reaction evidence="1">
        <text>2-[(2R,5Z)-2-carboxy-4-methylthiazol-5(2H)-ylidene]ethyl phosphate + 4-amino-2-methyl-5-(diphosphooxymethyl)pyrimidine + 2 H(+) = thiamine phosphate + CO2 + diphosphate</text>
        <dbReference type="Rhea" id="RHEA:47844"/>
        <dbReference type="ChEBI" id="CHEBI:15378"/>
        <dbReference type="ChEBI" id="CHEBI:16526"/>
        <dbReference type="ChEBI" id="CHEBI:33019"/>
        <dbReference type="ChEBI" id="CHEBI:37575"/>
        <dbReference type="ChEBI" id="CHEBI:57841"/>
        <dbReference type="ChEBI" id="CHEBI:62899"/>
        <dbReference type="EC" id="2.5.1.3"/>
    </reaction>
</comment>
<comment type="catalytic activity">
    <reaction evidence="1">
        <text>2-(2-carboxy-4-methylthiazol-5-yl)ethyl phosphate + 4-amino-2-methyl-5-(diphosphooxymethyl)pyrimidine + 2 H(+) = thiamine phosphate + CO2 + diphosphate</text>
        <dbReference type="Rhea" id="RHEA:47848"/>
        <dbReference type="ChEBI" id="CHEBI:15378"/>
        <dbReference type="ChEBI" id="CHEBI:16526"/>
        <dbReference type="ChEBI" id="CHEBI:33019"/>
        <dbReference type="ChEBI" id="CHEBI:37575"/>
        <dbReference type="ChEBI" id="CHEBI:57841"/>
        <dbReference type="ChEBI" id="CHEBI:62890"/>
        <dbReference type="EC" id="2.5.1.3"/>
    </reaction>
</comment>
<comment type="catalytic activity">
    <reaction evidence="1">
        <text>4-methyl-5-(2-phosphooxyethyl)-thiazole + 4-amino-2-methyl-5-(diphosphooxymethyl)pyrimidine + H(+) = thiamine phosphate + diphosphate</text>
        <dbReference type="Rhea" id="RHEA:22328"/>
        <dbReference type="ChEBI" id="CHEBI:15378"/>
        <dbReference type="ChEBI" id="CHEBI:33019"/>
        <dbReference type="ChEBI" id="CHEBI:37575"/>
        <dbReference type="ChEBI" id="CHEBI:57841"/>
        <dbReference type="ChEBI" id="CHEBI:58296"/>
        <dbReference type="EC" id="2.5.1.3"/>
    </reaction>
</comment>
<comment type="cofactor">
    <cofactor evidence="1">
        <name>Mg(2+)</name>
        <dbReference type="ChEBI" id="CHEBI:18420"/>
    </cofactor>
    <text evidence="1">Binds 1 Mg(2+) ion per subunit.</text>
</comment>
<comment type="pathway">
    <text evidence="1">Cofactor biosynthesis; thiamine diphosphate biosynthesis; thiamine phosphate from 4-amino-2-methyl-5-diphosphomethylpyrimidine and 4-methyl-5-(2-phosphoethyl)-thiazole: step 1/1.</text>
</comment>
<comment type="similarity">
    <text evidence="1">Belongs to the thiamine-phosphate synthase family.</text>
</comment>
<organism>
    <name type="scientific">Methanoregula boonei (strain DSM 21154 / JCM 14090 / 6A8)</name>
    <dbReference type="NCBI Taxonomy" id="456442"/>
    <lineage>
        <taxon>Archaea</taxon>
        <taxon>Methanobacteriati</taxon>
        <taxon>Methanobacteriota</taxon>
        <taxon>Stenosarchaea group</taxon>
        <taxon>Methanomicrobia</taxon>
        <taxon>Methanomicrobiales</taxon>
        <taxon>Methanoregulaceae</taxon>
        <taxon>Methanoregula</taxon>
    </lineage>
</organism>
<feature type="chain" id="PRO_0000336436" description="Thiamine-phosphate synthase">
    <location>
        <begin position="1"/>
        <end position="216"/>
    </location>
</feature>
<feature type="binding site" evidence="1">
    <location>
        <begin position="35"/>
        <end position="39"/>
    </location>
    <ligand>
        <name>4-amino-2-methyl-5-(diphosphooxymethyl)pyrimidine</name>
        <dbReference type="ChEBI" id="CHEBI:57841"/>
    </ligand>
</feature>
<feature type="binding site" evidence="1">
    <location>
        <position position="67"/>
    </location>
    <ligand>
        <name>4-amino-2-methyl-5-(diphosphooxymethyl)pyrimidine</name>
        <dbReference type="ChEBI" id="CHEBI:57841"/>
    </ligand>
</feature>
<feature type="binding site" evidence="1">
    <location>
        <position position="68"/>
    </location>
    <ligand>
        <name>Mg(2+)</name>
        <dbReference type="ChEBI" id="CHEBI:18420"/>
    </ligand>
</feature>
<feature type="binding site" evidence="1">
    <location>
        <position position="87"/>
    </location>
    <ligand>
        <name>Mg(2+)</name>
        <dbReference type="ChEBI" id="CHEBI:18420"/>
    </ligand>
</feature>
<feature type="binding site" evidence="1">
    <location>
        <position position="106"/>
    </location>
    <ligand>
        <name>4-amino-2-methyl-5-(diphosphooxymethyl)pyrimidine</name>
        <dbReference type="ChEBI" id="CHEBI:57841"/>
    </ligand>
</feature>
<feature type="binding site" evidence="1">
    <location>
        <begin position="132"/>
        <end position="134"/>
    </location>
    <ligand>
        <name>2-[(2R,5Z)-2-carboxy-4-methylthiazol-5(2H)-ylidene]ethyl phosphate</name>
        <dbReference type="ChEBI" id="CHEBI:62899"/>
    </ligand>
</feature>
<feature type="binding site" evidence="1">
    <location>
        <position position="135"/>
    </location>
    <ligand>
        <name>4-amino-2-methyl-5-(diphosphooxymethyl)pyrimidine</name>
        <dbReference type="ChEBI" id="CHEBI:57841"/>
    </ligand>
</feature>
<feature type="binding site" evidence="1">
    <location>
        <position position="163"/>
    </location>
    <ligand>
        <name>2-[(2R,5Z)-2-carboxy-4-methylthiazol-5(2H)-ylidene]ethyl phosphate</name>
        <dbReference type="ChEBI" id="CHEBI:62899"/>
    </ligand>
</feature>
<feature type="binding site" evidence="1">
    <location>
        <begin position="183"/>
        <end position="184"/>
    </location>
    <ligand>
        <name>2-[(2R,5Z)-2-carboxy-4-methylthiazol-5(2H)-ylidene]ethyl phosphate</name>
        <dbReference type="ChEBI" id="CHEBI:62899"/>
    </ligand>
</feature>
<gene>
    <name evidence="1" type="primary">thiE</name>
    <name type="ordered locus">Mboo_2056</name>
</gene>